<reference key="1">
    <citation type="journal article" date="1991" name="Genes Dev.">
        <title>Rodletless, a new Aspergillus developmental mutant induced by directed gene inactivation.</title>
        <authorList>
            <person name="Stringer M.A."/>
            <person name="Dean R.A."/>
            <person name="Sewall T.C."/>
            <person name="Timberlake W.E."/>
        </authorList>
    </citation>
    <scope>NUCLEOTIDE SEQUENCE [GENOMIC DNA]</scope>
    <scope>FUNCTION</scope>
    <scope>DISRUPTION PHENOTYPE</scope>
    <scope>INDUCTION</scope>
    <scope>DEVELOPMENTAL STAGE</scope>
    <scope>SUBCELLULAR LOCATION</scope>
</reference>
<reference key="2">
    <citation type="journal article" date="2005" name="Nature">
        <title>Sequencing of Aspergillus nidulans and comparative analysis with A. fumigatus and A. oryzae.</title>
        <authorList>
            <person name="Galagan J.E."/>
            <person name="Calvo S.E."/>
            <person name="Cuomo C."/>
            <person name="Ma L.-J."/>
            <person name="Wortman J.R."/>
            <person name="Batzoglou S."/>
            <person name="Lee S.-I."/>
            <person name="Bastuerkmen M."/>
            <person name="Spevak C.C."/>
            <person name="Clutterbuck J."/>
            <person name="Kapitonov V."/>
            <person name="Jurka J."/>
            <person name="Scazzocchio C."/>
            <person name="Farman M.L."/>
            <person name="Butler J."/>
            <person name="Purcell S."/>
            <person name="Harris S."/>
            <person name="Braus G.H."/>
            <person name="Draht O."/>
            <person name="Busch S."/>
            <person name="D'Enfert C."/>
            <person name="Bouchier C."/>
            <person name="Goldman G.H."/>
            <person name="Bell-Pedersen D."/>
            <person name="Griffiths-Jones S."/>
            <person name="Doonan J.H."/>
            <person name="Yu J."/>
            <person name="Vienken K."/>
            <person name="Pain A."/>
            <person name="Freitag M."/>
            <person name="Selker E.U."/>
            <person name="Archer D.B."/>
            <person name="Penalva M.A."/>
            <person name="Oakley B.R."/>
            <person name="Momany M."/>
            <person name="Tanaka T."/>
            <person name="Kumagai T."/>
            <person name="Asai K."/>
            <person name="Machida M."/>
            <person name="Nierman W.C."/>
            <person name="Denning D.W."/>
            <person name="Caddick M.X."/>
            <person name="Hynes M."/>
            <person name="Paoletti M."/>
            <person name="Fischer R."/>
            <person name="Miller B.L."/>
            <person name="Dyer P.S."/>
            <person name="Sachs M.S."/>
            <person name="Osmani S.A."/>
            <person name="Birren B.W."/>
        </authorList>
    </citation>
    <scope>NUCLEOTIDE SEQUENCE [LARGE SCALE GENOMIC DNA]</scope>
    <source>
        <strain>FGSC A4 / ATCC 38163 / CBS 112.46 / NRRL 194 / M139</strain>
    </source>
</reference>
<reference key="3">
    <citation type="journal article" date="2009" name="Fungal Genet. Biol.">
        <title>The 2008 update of the Aspergillus nidulans genome annotation: a community effort.</title>
        <authorList>
            <person name="Wortman J.R."/>
            <person name="Gilsenan J.M."/>
            <person name="Joardar V."/>
            <person name="Deegan J."/>
            <person name="Clutterbuck J."/>
            <person name="Andersen M.R."/>
            <person name="Archer D."/>
            <person name="Bencina M."/>
            <person name="Braus G."/>
            <person name="Coutinho P."/>
            <person name="von Dohren H."/>
            <person name="Doonan J."/>
            <person name="Driessen A.J."/>
            <person name="Durek P."/>
            <person name="Espeso E."/>
            <person name="Fekete E."/>
            <person name="Flipphi M."/>
            <person name="Estrada C.G."/>
            <person name="Geysens S."/>
            <person name="Goldman G."/>
            <person name="de Groot P.W."/>
            <person name="Hansen K."/>
            <person name="Harris S.D."/>
            <person name="Heinekamp T."/>
            <person name="Helmstaedt K."/>
            <person name="Henrissat B."/>
            <person name="Hofmann G."/>
            <person name="Homan T."/>
            <person name="Horio T."/>
            <person name="Horiuchi H."/>
            <person name="James S."/>
            <person name="Jones M."/>
            <person name="Karaffa L."/>
            <person name="Karanyi Z."/>
            <person name="Kato M."/>
            <person name="Keller N."/>
            <person name="Kelly D.E."/>
            <person name="Kiel J.A."/>
            <person name="Kim J.M."/>
            <person name="van der Klei I.J."/>
            <person name="Klis F.M."/>
            <person name="Kovalchuk A."/>
            <person name="Krasevec N."/>
            <person name="Kubicek C.P."/>
            <person name="Liu B."/>
            <person name="Maccabe A."/>
            <person name="Meyer V."/>
            <person name="Mirabito P."/>
            <person name="Miskei M."/>
            <person name="Mos M."/>
            <person name="Mullins J."/>
            <person name="Nelson D.R."/>
            <person name="Nielsen J."/>
            <person name="Oakley B.R."/>
            <person name="Osmani S.A."/>
            <person name="Pakula T."/>
            <person name="Paszewski A."/>
            <person name="Paulsen I."/>
            <person name="Pilsyk S."/>
            <person name="Pocsi I."/>
            <person name="Punt P.J."/>
            <person name="Ram A.F."/>
            <person name="Ren Q."/>
            <person name="Robellet X."/>
            <person name="Robson G."/>
            <person name="Seiboth B."/>
            <person name="van Solingen P."/>
            <person name="Specht T."/>
            <person name="Sun J."/>
            <person name="Taheri-Talesh N."/>
            <person name="Takeshita N."/>
            <person name="Ussery D."/>
            <person name="vanKuyk P.A."/>
            <person name="Visser H."/>
            <person name="van de Vondervoort P.J."/>
            <person name="de Vries R.P."/>
            <person name="Walton J."/>
            <person name="Xiang X."/>
            <person name="Xiong Y."/>
            <person name="Zeng A.P."/>
            <person name="Brandt B.W."/>
            <person name="Cornell M.J."/>
            <person name="van den Hondel C.A."/>
            <person name="Visser J."/>
            <person name="Oliver S.G."/>
            <person name="Turner G."/>
        </authorList>
    </citation>
    <scope>GENOME REANNOTATION</scope>
    <source>
        <strain>FGSC A4 / ATCC 38163 / CBS 112.46 / NRRL 194 / M139</strain>
    </source>
</reference>
<reference key="4">
    <citation type="journal article" date="1999" name="Lett. Appl. Microbiol.">
        <title>The role of the rodlet structure on the physicochemical properties of Aspergillus conidia.</title>
        <authorList>
            <person name="Girardin H."/>
            <person name="Paris S."/>
            <person name="Rault J."/>
            <person name="Bellon-Fontaine M.N."/>
            <person name="Latge J.P."/>
        </authorList>
    </citation>
    <scope>FUNCTION</scope>
</reference>
<reference key="5">
    <citation type="journal article" date="2014" name="PLoS ONE">
        <title>Six hydrophobins are involved in hydrophobin rodlet formation in Aspergillus nidulans and contribute to hydrophobicity of the spore surface.</title>
        <authorList>
            <person name="Gruenbacher A."/>
            <person name="Throm T."/>
            <person name="Seidel C."/>
            <person name="Gutt B."/>
            <person name="Roehrig J."/>
            <person name="Strunk T."/>
            <person name="Vincze P."/>
            <person name="Walheim S."/>
            <person name="Schimmel T."/>
            <person name="Wenzel W."/>
            <person name="Fischer R."/>
        </authorList>
    </citation>
    <scope>FUNCTION</scope>
</reference>
<reference key="6">
    <citation type="journal article" date="2016" name="Biotechnol. Biofuels">
        <title>RNAseq reveals hydrophobins that are involved in the adaptation of Aspergillus nidulans to lignocellulose.</title>
        <authorList>
            <person name="Brown N.A."/>
            <person name="Ries L.N."/>
            <person name="Reis T.F."/>
            <person name="Rajendran R."/>
            <person name="Correa Dos Santos R.A."/>
            <person name="Ramage G."/>
            <person name="Riano-Pachon D.M."/>
            <person name="Goldman G.H."/>
        </authorList>
    </citation>
    <scope>FUNCTION</scope>
    <scope>DISRUPTION PHENOTYPE</scope>
</reference>
<gene>
    <name evidence="7" type="primary">rodA</name>
    <name type="ORF">AN8803</name>
</gene>
<name>RODA_EMENI</name>
<dbReference type="EMBL" id="M61113">
    <property type="protein sequence ID" value="AAA33321.1"/>
    <property type="molecule type" value="Genomic_DNA"/>
</dbReference>
<dbReference type="EMBL" id="AACD01000161">
    <property type="protein sequence ID" value="EAA60596.1"/>
    <property type="molecule type" value="Genomic_DNA"/>
</dbReference>
<dbReference type="EMBL" id="BN001303">
    <property type="protein sequence ID" value="CBF77990.1"/>
    <property type="molecule type" value="Genomic_DNA"/>
</dbReference>
<dbReference type="PIR" id="A40323">
    <property type="entry name" value="A40323"/>
</dbReference>
<dbReference type="RefSeq" id="XP_682072.1">
    <property type="nucleotide sequence ID" value="XM_676980.2"/>
</dbReference>
<dbReference type="SMR" id="P28346"/>
<dbReference type="STRING" id="227321.P28346"/>
<dbReference type="GlyCosmos" id="P28346">
    <property type="glycosylation" value="1 site, No reported glycans"/>
</dbReference>
<dbReference type="EnsemblFungi" id="CBF77990">
    <property type="protein sequence ID" value="CBF77990"/>
    <property type="gene ID" value="ANIA_08803"/>
</dbReference>
<dbReference type="GeneID" id="2868430"/>
<dbReference type="KEGG" id="ani:ANIA_08803"/>
<dbReference type="VEuPathDB" id="FungiDB:AN8803"/>
<dbReference type="eggNOG" id="ENOG502T10M">
    <property type="taxonomic scope" value="Eukaryota"/>
</dbReference>
<dbReference type="HOGENOM" id="CLU_106380_1_0_1"/>
<dbReference type="InParanoid" id="P28346"/>
<dbReference type="OMA" id="DNMTVKQ"/>
<dbReference type="OrthoDB" id="4225815at2759"/>
<dbReference type="Proteomes" id="UP000000560">
    <property type="component" value="Chromosome III"/>
</dbReference>
<dbReference type="GO" id="GO:0005576">
    <property type="term" value="C:extracellular region"/>
    <property type="evidence" value="ECO:0007669"/>
    <property type="project" value="UniProtKB-KW"/>
</dbReference>
<dbReference type="GO" id="GO:0009277">
    <property type="term" value="C:fungal-type cell wall"/>
    <property type="evidence" value="ECO:0007669"/>
    <property type="project" value="InterPro"/>
</dbReference>
<dbReference type="GO" id="GO:0031160">
    <property type="term" value="C:spore wall"/>
    <property type="evidence" value="ECO:0000314"/>
    <property type="project" value="AspGD"/>
</dbReference>
<dbReference type="GO" id="GO:0005199">
    <property type="term" value="F:structural constituent of cell wall"/>
    <property type="evidence" value="ECO:0007669"/>
    <property type="project" value="InterPro"/>
</dbReference>
<dbReference type="GO" id="GO:0042243">
    <property type="term" value="P:asexual spore wall assembly"/>
    <property type="evidence" value="ECO:0000315"/>
    <property type="project" value="AspGD"/>
</dbReference>
<dbReference type="CDD" id="cd23507">
    <property type="entry name" value="hydrophobin_I"/>
    <property type="match status" value="1"/>
</dbReference>
<dbReference type="InterPro" id="IPR001338">
    <property type="entry name" value="Hydrophobin"/>
</dbReference>
<dbReference type="InterPro" id="IPR019778">
    <property type="entry name" value="Hydrophobin_CS"/>
</dbReference>
<dbReference type="Pfam" id="PF01185">
    <property type="entry name" value="Hydrophobin"/>
    <property type="match status" value="1"/>
</dbReference>
<dbReference type="SMART" id="SM00075">
    <property type="entry name" value="HYDRO"/>
    <property type="match status" value="1"/>
</dbReference>
<dbReference type="PROSITE" id="PS00956">
    <property type="entry name" value="HYDROPHOBIN"/>
    <property type="match status" value="1"/>
</dbReference>
<organism>
    <name type="scientific">Emericella nidulans (strain FGSC A4 / ATCC 38163 / CBS 112.46 / NRRL 194 / M139)</name>
    <name type="common">Aspergillus nidulans</name>
    <dbReference type="NCBI Taxonomy" id="227321"/>
    <lineage>
        <taxon>Eukaryota</taxon>
        <taxon>Fungi</taxon>
        <taxon>Dikarya</taxon>
        <taxon>Ascomycota</taxon>
        <taxon>Pezizomycotina</taxon>
        <taxon>Eurotiomycetes</taxon>
        <taxon>Eurotiomycetidae</taxon>
        <taxon>Eurotiales</taxon>
        <taxon>Aspergillaceae</taxon>
        <taxon>Aspergillus</taxon>
        <taxon>Aspergillus subgen. Nidulantes</taxon>
    </lineage>
</organism>
<sequence>MKFSIAAAVVAFAASVAALPPAHDSQFAGNGVGNKGNSNVKFPVPENVTVKQASDKCGDQAQLSCCNKATYAGDTTTVDEGLLSGALSGLIGAGSGAEGLGLFDQCSKLDVAVLIGIQDLVNQKCKQNIACCQNSPSSADGNLIGVGLPCVALGSIL</sequence>
<comment type="function">
    <text evidence="3 4 5 6 8">Aerial growth, conidiation, and dispersal of filamentous fungi in the environment rely upon a capability of their secreting small amphipathic proteins called hydrophobins (HPBs) with low sequence identity. Class I can self-assemble into an outermost layer of rodlet bundles on aerial cell surfaces, conferring cellular hydrophobicity that supports fungal growth, development and dispersal; whereas Class II form highly ordered films at water-air interfaces through intermolecular interactions but contribute nothing to the rodlet structure (Probable). RodA is a class I hydrophobin that contributes to surface hydrophobicity, which is important for processes such as association of hyphae in reproductive structures, dispersal of aerial spores and adhesion of pathogens to host structures (PubMed:10664979, PubMed:2065971, PubMed:24722460). Important for the formation of hydrophobic rodlet layers of asexually-produced spores (PubMed:10664979, PubMed:2065971). Promotes also biofilm formation and may enhance lignocellulose utilization via promoting a compact substrate-enzyme-fungus structure (PubMed:27437031).</text>
</comment>
<comment type="subunit">
    <text evidence="1">Self-assembles to form functional amyloid fibrils called rodlets. Self-assembly into fibrillar rodlets occurs spontaneously at hydrophobic:hydrophilic interfaces and the rodlets further associate laterally to form amphipathic monolayers.</text>
</comment>
<comment type="subcellular location">
    <subcellularLocation>
        <location evidence="4">Secreted</location>
    </subcellularLocation>
    <subcellularLocation>
        <location evidence="4">Spore wall</location>
    </subcellularLocation>
</comment>
<comment type="developmental stage">
    <text evidence="4">Accumulates at about the time sterigmata appear and remains at high levels throughout the final stages of conidiophore formation and during spore differentiation and maturation.</text>
</comment>
<comment type="induction">
    <text evidence="4">Expression is induced by the transcription factor brlA.</text>
</comment>
<comment type="disruption phenotype">
    <text evidence="4 6">Impairs the production of thin, proteinaceous, outer spore-wall layer, called the rodlet layer (PubMed:2065971). Reduces biofilm formation and the retention of the hydrolytic enzymes within the vicinity of the fungus (PubMed:27437031).</text>
</comment>
<comment type="similarity">
    <text evidence="8">Belongs to the fungal hydrophobin family.</text>
</comment>
<accession>P28346</accession>
<accession>C8V9N5</accession>
<accession>Q5ASC7</accession>
<protein>
    <recommendedName>
        <fullName evidence="7">Class I hydrophobin rodA</fullName>
    </recommendedName>
    <alternativeName>
        <fullName evidence="7">Rodlet protein A</fullName>
    </alternativeName>
</protein>
<proteinExistence type="evidence at transcript level"/>
<keyword id="KW-0961">Cell wall biogenesis/degradation</keyword>
<keyword id="KW-0183">Conidiation</keyword>
<keyword id="KW-1015">Disulfide bond</keyword>
<keyword id="KW-0325">Glycoprotein</keyword>
<keyword id="KW-1185">Reference proteome</keyword>
<keyword id="KW-0964">Secreted</keyword>
<keyword id="KW-0732">Signal</keyword>
<keyword id="KW-0749">Sporulation</keyword>
<feature type="signal peptide" evidence="2">
    <location>
        <begin position="1"/>
        <end position="41"/>
    </location>
</feature>
<feature type="chain" id="PRO_0000013508" description="Class I hydrophobin rodA">
    <location>
        <begin position="42"/>
        <end position="157"/>
    </location>
</feature>
<feature type="glycosylation site" description="N-linked (GlcNAc...) asparagine" evidence="2">
    <location>
        <position position="47"/>
    </location>
</feature>
<feature type="disulfide bond" evidence="1">
    <location>
        <begin position="57"/>
        <end position="131"/>
    </location>
</feature>
<feature type="disulfide bond" evidence="1">
    <location>
        <begin position="65"/>
        <end position="125"/>
    </location>
</feature>
<feature type="disulfide bond" evidence="1">
    <location>
        <begin position="66"/>
        <end position="106"/>
    </location>
</feature>
<feature type="disulfide bond" evidence="1">
    <location>
        <begin position="132"/>
        <end position="150"/>
    </location>
</feature>
<evidence type="ECO:0000250" key="1">
    <source>
        <dbReference type="UniProtKB" id="Q04571"/>
    </source>
</evidence>
<evidence type="ECO:0000255" key="2"/>
<evidence type="ECO:0000269" key="3">
    <source>
    </source>
</evidence>
<evidence type="ECO:0000269" key="4">
    <source>
    </source>
</evidence>
<evidence type="ECO:0000269" key="5">
    <source>
    </source>
</evidence>
<evidence type="ECO:0000269" key="6">
    <source>
    </source>
</evidence>
<evidence type="ECO:0000303" key="7">
    <source>
    </source>
</evidence>
<evidence type="ECO:0000305" key="8"/>